<dbReference type="EMBL" id="AY346090">
    <property type="protein sequence ID" value="AAR05100.1"/>
    <property type="molecule type" value="mRNA"/>
</dbReference>
<dbReference type="EMBL" id="BX248522">
    <property type="status" value="NOT_ANNOTATED_CDS"/>
    <property type="molecule type" value="Genomic_DNA"/>
</dbReference>
<dbReference type="EMBL" id="BX511227">
    <property type="status" value="NOT_ANNOTATED_CDS"/>
    <property type="molecule type" value="Genomic_DNA"/>
</dbReference>
<dbReference type="EMBL" id="BX537135">
    <property type="status" value="NOT_ANNOTATED_CDS"/>
    <property type="molecule type" value="Genomic_DNA"/>
</dbReference>
<dbReference type="EMBL" id="CT997821">
    <property type="status" value="NOT_ANNOTATED_CDS"/>
    <property type="molecule type" value="Genomic_DNA"/>
</dbReference>
<dbReference type="RefSeq" id="NP_001292547.1">
    <property type="nucleotide sequence ID" value="NM_001305618.1"/>
</dbReference>
<dbReference type="SMR" id="Q6V9Y8"/>
<dbReference type="FunCoup" id="Q6V9Y8">
    <property type="interactions" value="1105"/>
</dbReference>
<dbReference type="STRING" id="7955.ENSDARP00000142166"/>
<dbReference type="GlyCosmos" id="Q6V9Y8">
    <property type="glycosylation" value="5 sites, No reported glycans"/>
</dbReference>
<dbReference type="PaxDb" id="7955-ENSDARP00000039553"/>
<dbReference type="Ensembl" id="ENSDART00000173108">
    <property type="protein sequence ID" value="ENSDARP00000142166"/>
    <property type="gene ID" value="ENSDARG00000032199"/>
</dbReference>
<dbReference type="GeneID" id="387365"/>
<dbReference type="KEGG" id="dre:387365"/>
<dbReference type="AGR" id="ZFIN:ZDB-GENE-031212-1"/>
<dbReference type="CTD" id="2719"/>
<dbReference type="ZFIN" id="ZDB-GENE-031212-1">
    <property type="gene designation" value="gpc3"/>
</dbReference>
<dbReference type="eggNOG" id="KOG3821">
    <property type="taxonomic scope" value="Eukaryota"/>
</dbReference>
<dbReference type="InParanoid" id="Q6V9Y8"/>
<dbReference type="OMA" id="TNSMFRS"/>
<dbReference type="OrthoDB" id="6380619at2759"/>
<dbReference type="PhylomeDB" id="Q6V9Y8"/>
<dbReference type="Reactome" id="R-DRE-1971475">
    <property type="pathway name" value="A tetrasaccharide linker sequence is required for GAG synthesis"/>
</dbReference>
<dbReference type="Reactome" id="R-DRE-2022928">
    <property type="pathway name" value="HS-GAG biosynthesis"/>
</dbReference>
<dbReference type="Reactome" id="R-DRE-2024096">
    <property type="pathway name" value="HS-GAG degradation"/>
</dbReference>
<dbReference type="SignaLink" id="Q6V9Y8"/>
<dbReference type="PRO" id="PR:Q6V9Y8"/>
<dbReference type="Proteomes" id="UP000000437">
    <property type="component" value="Alternate scaffold 14"/>
</dbReference>
<dbReference type="Proteomes" id="UP000000437">
    <property type="component" value="Chromosome 14"/>
</dbReference>
<dbReference type="Bgee" id="ENSDARG00000032199">
    <property type="expression patterns" value="Expressed in mature ovarian follicle and 13 other cell types or tissues"/>
</dbReference>
<dbReference type="GO" id="GO:0009986">
    <property type="term" value="C:cell surface"/>
    <property type="evidence" value="ECO:0000318"/>
    <property type="project" value="GO_Central"/>
</dbReference>
<dbReference type="GO" id="GO:0005886">
    <property type="term" value="C:plasma membrane"/>
    <property type="evidence" value="ECO:0000318"/>
    <property type="project" value="GO_Central"/>
</dbReference>
<dbReference type="GO" id="GO:0098552">
    <property type="term" value="C:side of membrane"/>
    <property type="evidence" value="ECO:0007669"/>
    <property type="project" value="UniProtKB-KW"/>
</dbReference>
<dbReference type="GO" id="GO:0016477">
    <property type="term" value="P:cell migration"/>
    <property type="evidence" value="ECO:0000318"/>
    <property type="project" value="GO_Central"/>
</dbReference>
<dbReference type="GO" id="GO:0042074">
    <property type="term" value="P:cell migration involved in gastrulation"/>
    <property type="evidence" value="ECO:0000315"/>
    <property type="project" value="ZFIN"/>
</dbReference>
<dbReference type="GO" id="GO:0060976">
    <property type="term" value="P:coronary vasculature development"/>
    <property type="evidence" value="ECO:0000250"/>
    <property type="project" value="UniProtKB"/>
</dbReference>
<dbReference type="GO" id="GO:0090090">
    <property type="term" value="P:negative regulation of canonical Wnt signaling pathway"/>
    <property type="evidence" value="ECO:0000316"/>
    <property type="project" value="ZFIN"/>
</dbReference>
<dbReference type="GO" id="GO:0045879">
    <property type="term" value="P:negative regulation of smoothened signaling pathway"/>
    <property type="evidence" value="ECO:0000250"/>
    <property type="project" value="UniProtKB"/>
</dbReference>
<dbReference type="GO" id="GO:0090263">
    <property type="term" value="P:positive regulation of canonical Wnt signaling pathway"/>
    <property type="evidence" value="ECO:0000250"/>
    <property type="project" value="UniProtKB"/>
</dbReference>
<dbReference type="GO" id="GO:0045807">
    <property type="term" value="P:positive regulation of endocytosis"/>
    <property type="evidence" value="ECO:0000250"/>
    <property type="project" value="UniProtKB"/>
</dbReference>
<dbReference type="GO" id="GO:0045732">
    <property type="term" value="P:positive regulation of protein catabolic process"/>
    <property type="evidence" value="ECO:0000250"/>
    <property type="project" value="UniProtKB"/>
</dbReference>
<dbReference type="GO" id="GO:0060828">
    <property type="term" value="P:regulation of canonical Wnt signaling pathway"/>
    <property type="evidence" value="ECO:0000250"/>
    <property type="project" value="UniProtKB"/>
</dbReference>
<dbReference type="GO" id="GO:2000050">
    <property type="term" value="P:regulation of non-canonical Wnt signaling pathway"/>
    <property type="evidence" value="ECO:0000250"/>
    <property type="project" value="UniProtKB"/>
</dbReference>
<dbReference type="GO" id="GO:1905475">
    <property type="term" value="P:regulation of protein localization to membrane"/>
    <property type="evidence" value="ECO:0000318"/>
    <property type="project" value="GO_Central"/>
</dbReference>
<dbReference type="InterPro" id="IPR001863">
    <property type="entry name" value="Glypican"/>
</dbReference>
<dbReference type="PANTHER" id="PTHR10822">
    <property type="entry name" value="GLYPICAN"/>
    <property type="match status" value="1"/>
</dbReference>
<dbReference type="PANTHER" id="PTHR10822:SF4">
    <property type="entry name" value="GLYPICAN-3"/>
    <property type="match status" value="1"/>
</dbReference>
<dbReference type="Pfam" id="PF01153">
    <property type="entry name" value="Glypican"/>
    <property type="match status" value="1"/>
</dbReference>
<comment type="function">
    <text evidence="3 4 9">Cell surface proteoglycan (By similarity). Negatively regulates the hedgehog signaling pathway (By similarity). Positively regulates the canonical and non-canonical Wnt signaling pathways (By similarity). Binds to CD81 which decreases the availability of free CD81 for binding to the transcriptional repressor HHEX, resulting in nuclear translocation of HHEX and transcriptional repression (By similarity). Inhibits the dipeptidyl peptidase activity of DPP4 (By similarity). Plays a role in limb patterning and skeletal development (By similarity). Modulates the effects of growth factors on renal branching morphogenesis (By similarity). Required for coronary vascular development (By similarity). Plays a role in regulating cell movements during gastrulation (PubMed:14610063).</text>
</comment>
<comment type="subunit">
    <text evidence="9">Heterodimer; disulfide-linked. Cleavage by a furin-like convertase results in production of alpha and beta chains which form a disulfide-linked heterodimer.</text>
</comment>
<comment type="subcellular location">
    <subcellularLocation>
        <location evidence="1">Cell membrane</location>
        <topology evidence="1">Lipid-anchor</topology>
        <topology evidence="1">GPI-anchor</topology>
        <orientation evidence="1">Extracellular side</orientation>
    </subcellularLocation>
</comment>
<comment type="tissue specificity">
    <text evidence="9">Maternally expressed and is almost ubiquitous during blastula and gastrula stages but becomes restricted to the prospective hindbrain by 24 hours post-fertilization.</text>
</comment>
<comment type="PTM">
    <text evidence="3">O-glycosylated; contains heparan sulfate and/or chondroitin sulfate.</text>
</comment>
<comment type="PTM">
    <text evidence="3 9">Cleaved intracellularly by a furin-like convertase to generate 2 subunits, alpha and beta, which remain associated through disulfide bonds and are associated with the cell surface via the GPI-anchor (PubMed:14610063). This processing is essential for its role in inhibition of hedgehog signaling (By similarity). A second proteolytic event may result in cleavage of the protein on the cell surface, separating it from the GPI-anchor and leading to its shedding from the cell surface (By similarity).</text>
</comment>
<comment type="disruption phenotype">
    <text evidence="9">Morpholino knockdown results in severe defects during epiboly with most embryos arrested at 60-80% epiboly.</text>
</comment>
<comment type="similarity">
    <text evidence="7">Belongs to the glypican family.</text>
</comment>
<name>GPC3_DANRE</name>
<protein>
    <recommendedName>
        <fullName evidence="10">Glypican-3</fullName>
    </recommendedName>
    <component>
        <recommendedName>
            <fullName evidence="3">Glypican-3 alpha subunit</fullName>
        </recommendedName>
    </component>
    <component>
        <recommendedName>
            <fullName evidence="3">Glypican-3 beta subunit</fullName>
        </recommendedName>
    </component>
</protein>
<reference evidence="11" key="1">
    <citation type="journal article" date="2003" name="J. Cell Biol.">
        <title>Processing by proprotein convertases is required for glypican-3 modulation of cell survival, Wnt signaling, and gastrulation movements.</title>
        <authorList>
            <person name="De Cat B."/>
            <person name="Muyldermans S.Y."/>
            <person name="Coomans C."/>
            <person name="Degeest G."/>
            <person name="Vanderschueren B."/>
            <person name="Creemers J."/>
            <person name="Biemar F."/>
            <person name="Peers B."/>
            <person name="David G."/>
        </authorList>
    </citation>
    <scope>NUCLEOTIDE SEQUENCE [MRNA]</scope>
    <scope>FUNCTION</scope>
    <scope>SUBUNIT</scope>
    <scope>TISSUE SPECIFICITY</scope>
    <scope>CLEAVAGE</scope>
    <scope>DISRUPTION PHENOTYPE</scope>
    <scope>MUTAGENESIS OF 348-ARG--ARG-351</scope>
</reference>
<reference evidence="12" key="2">
    <citation type="journal article" date="2013" name="Nature">
        <title>The zebrafish reference genome sequence and its relationship to the human genome.</title>
        <authorList>
            <person name="Howe K."/>
            <person name="Clark M.D."/>
            <person name="Torroja C.F."/>
            <person name="Torrance J."/>
            <person name="Berthelot C."/>
            <person name="Muffato M."/>
            <person name="Collins J.E."/>
            <person name="Humphray S."/>
            <person name="McLaren K."/>
            <person name="Matthews L."/>
            <person name="McLaren S."/>
            <person name="Sealy I."/>
            <person name="Caccamo M."/>
            <person name="Churcher C."/>
            <person name="Scott C."/>
            <person name="Barrett J.C."/>
            <person name="Koch R."/>
            <person name="Rauch G.J."/>
            <person name="White S."/>
            <person name="Chow W."/>
            <person name="Kilian B."/>
            <person name="Quintais L.T."/>
            <person name="Guerra-Assuncao J.A."/>
            <person name="Zhou Y."/>
            <person name="Gu Y."/>
            <person name="Yen J."/>
            <person name="Vogel J.H."/>
            <person name="Eyre T."/>
            <person name="Redmond S."/>
            <person name="Banerjee R."/>
            <person name="Chi J."/>
            <person name="Fu B."/>
            <person name="Langley E."/>
            <person name="Maguire S.F."/>
            <person name="Laird G.K."/>
            <person name="Lloyd D."/>
            <person name="Kenyon E."/>
            <person name="Donaldson S."/>
            <person name="Sehra H."/>
            <person name="Almeida-King J."/>
            <person name="Loveland J."/>
            <person name="Trevanion S."/>
            <person name="Jones M."/>
            <person name="Quail M."/>
            <person name="Willey D."/>
            <person name="Hunt A."/>
            <person name="Burton J."/>
            <person name="Sims S."/>
            <person name="McLay K."/>
            <person name="Plumb B."/>
            <person name="Davis J."/>
            <person name="Clee C."/>
            <person name="Oliver K."/>
            <person name="Clark R."/>
            <person name="Riddle C."/>
            <person name="Elliot D."/>
            <person name="Threadgold G."/>
            <person name="Harden G."/>
            <person name="Ware D."/>
            <person name="Begum S."/>
            <person name="Mortimore B."/>
            <person name="Kerry G."/>
            <person name="Heath P."/>
            <person name="Phillimore B."/>
            <person name="Tracey A."/>
            <person name="Corby N."/>
            <person name="Dunn M."/>
            <person name="Johnson C."/>
            <person name="Wood J."/>
            <person name="Clark S."/>
            <person name="Pelan S."/>
            <person name="Griffiths G."/>
            <person name="Smith M."/>
            <person name="Glithero R."/>
            <person name="Howden P."/>
            <person name="Barker N."/>
            <person name="Lloyd C."/>
            <person name="Stevens C."/>
            <person name="Harley J."/>
            <person name="Holt K."/>
            <person name="Panagiotidis G."/>
            <person name="Lovell J."/>
            <person name="Beasley H."/>
            <person name="Henderson C."/>
            <person name="Gordon D."/>
            <person name="Auger K."/>
            <person name="Wright D."/>
            <person name="Collins J."/>
            <person name="Raisen C."/>
            <person name="Dyer L."/>
            <person name="Leung K."/>
            <person name="Robertson L."/>
            <person name="Ambridge K."/>
            <person name="Leongamornlert D."/>
            <person name="McGuire S."/>
            <person name="Gilderthorp R."/>
            <person name="Griffiths C."/>
            <person name="Manthravadi D."/>
            <person name="Nichol S."/>
            <person name="Barker G."/>
            <person name="Whitehead S."/>
            <person name="Kay M."/>
            <person name="Brown J."/>
            <person name="Murnane C."/>
            <person name="Gray E."/>
            <person name="Humphries M."/>
            <person name="Sycamore N."/>
            <person name="Barker D."/>
            <person name="Saunders D."/>
            <person name="Wallis J."/>
            <person name="Babbage A."/>
            <person name="Hammond S."/>
            <person name="Mashreghi-Mohammadi M."/>
            <person name="Barr L."/>
            <person name="Martin S."/>
            <person name="Wray P."/>
            <person name="Ellington A."/>
            <person name="Matthews N."/>
            <person name="Ellwood M."/>
            <person name="Woodmansey R."/>
            <person name="Clark G."/>
            <person name="Cooper J."/>
            <person name="Tromans A."/>
            <person name="Grafham D."/>
            <person name="Skuce C."/>
            <person name="Pandian R."/>
            <person name="Andrews R."/>
            <person name="Harrison E."/>
            <person name="Kimberley A."/>
            <person name="Garnett J."/>
            <person name="Fosker N."/>
            <person name="Hall R."/>
            <person name="Garner P."/>
            <person name="Kelly D."/>
            <person name="Bird C."/>
            <person name="Palmer S."/>
            <person name="Gehring I."/>
            <person name="Berger A."/>
            <person name="Dooley C.M."/>
            <person name="Ersan-Urun Z."/>
            <person name="Eser C."/>
            <person name="Geiger H."/>
            <person name="Geisler M."/>
            <person name="Karotki L."/>
            <person name="Kirn A."/>
            <person name="Konantz J."/>
            <person name="Konantz M."/>
            <person name="Oberlander M."/>
            <person name="Rudolph-Geiger S."/>
            <person name="Teucke M."/>
            <person name="Lanz C."/>
            <person name="Raddatz G."/>
            <person name="Osoegawa K."/>
            <person name="Zhu B."/>
            <person name="Rapp A."/>
            <person name="Widaa S."/>
            <person name="Langford C."/>
            <person name="Yang F."/>
            <person name="Schuster S.C."/>
            <person name="Carter N.P."/>
            <person name="Harrow J."/>
            <person name="Ning Z."/>
            <person name="Herrero J."/>
            <person name="Searle S.M."/>
            <person name="Enright A."/>
            <person name="Geisler R."/>
            <person name="Plasterk R.H."/>
            <person name="Lee C."/>
            <person name="Westerfield M."/>
            <person name="de Jong P.J."/>
            <person name="Zon L.I."/>
            <person name="Postlethwait J.H."/>
            <person name="Nusslein-Volhard C."/>
            <person name="Hubbard T.J."/>
            <person name="Roest Crollius H."/>
            <person name="Rogers J."/>
            <person name="Stemple D.L."/>
        </authorList>
    </citation>
    <scope>NUCLEOTIDE SEQUENCE [LARGE SCALE GENOMIC DNA]</scope>
    <source>
        <strain evidence="12">Tuebingen</strain>
    </source>
</reference>
<accession>Q6V9Y8</accession>
<gene>
    <name evidence="13" type="primary">gpc3</name>
</gene>
<keyword id="KW-1003">Cell membrane</keyword>
<keyword id="KW-1015">Disulfide bond</keyword>
<keyword id="KW-0325">Glycoprotein</keyword>
<keyword id="KW-0336">GPI-anchor</keyword>
<keyword id="KW-0357">Heparan sulfate</keyword>
<keyword id="KW-0449">Lipoprotein</keyword>
<keyword id="KW-0472">Membrane</keyword>
<keyword id="KW-0654">Proteoglycan</keyword>
<keyword id="KW-1185">Reference proteome</keyword>
<keyword id="KW-0732">Signal</keyword>
<feature type="signal peptide" evidence="5">
    <location>
        <begin position="1"/>
        <end position="25"/>
    </location>
</feature>
<feature type="chain" id="PRO_0000445407" description="Glypican-3 alpha subunit" evidence="3">
    <location>
        <begin position="26"/>
        <end position="351"/>
    </location>
</feature>
<feature type="chain" id="PRO_0000445408" description="Glypican-3 beta subunit" evidence="3">
    <location>
        <begin position="352"/>
        <end status="unknown"/>
    </location>
</feature>
<feature type="propeptide" id="PRO_0000445409" description="Removed in mature form">
    <location>
        <begin status="unknown"/>
        <end position="590"/>
    </location>
</feature>
<feature type="region of interest" description="Disordered" evidence="8">
    <location>
        <begin position="429"/>
        <end position="450"/>
    </location>
</feature>
<feature type="region of interest" description="Disordered" evidence="8">
    <location>
        <begin position="476"/>
        <end position="520"/>
    </location>
</feature>
<feature type="compositionally biased region" description="Acidic residues" evidence="8">
    <location>
        <begin position="495"/>
        <end position="513"/>
    </location>
</feature>
<feature type="glycosylation site" description="N-linked (GlcNAc...) asparagine" evidence="6">
    <location>
        <position position="119"/>
    </location>
</feature>
<feature type="glycosylation site" description="N-linked (GlcNAc...) asparagine" evidence="6">
    <location>
        <position position="234"/>
    </location>
</feature>
<feature type="glycosylation site" description="N-linked (GlcNAc...) asparagine" evidence="6">
    <location>
        <position position="414"/>
    </location>
</feature>
<feature type="glycosylation site" description="O-linked (Xyl...) (glycosaminoglycan) serine" evidence="5">
    <location>
        <position position="504"/>
    </location>
</feature>
<feature type="glycosylation site" description="O-linked (Xyl...) (glycosaminoglycan) serine" evidence="5">
    <location>
        <position position="517"/>
    </location>
</feature>
<feature type="disulfide bond" evidence="2">
    <location>
        <begin position="30"/>
        <end position="67"/>
    </location>
</feature>
<feature type="disulfide bond" evidence="2">
    <location>
        <begin position="60"/>
        <end position="255"/>
    </location>
</feature>
<feature type="disulfide bond" evidence="2">
    <location>
        <begin position="68"/>
        <end position="258"/>
    </location>
</feature>
<feature type="disulfide bond" evidence="2">
    <location>
        <begin position="190"/>
        <end position="342"/>
    </location>
</feature>
<feature type="disulfide bond" evidence="2">
    <location>
        <begin position="245"/>
        <end position="278"/>
    </location>
</feature>
<feature type="disulfide bond" description="Interchain (between alpha and beta chains)" evidence="2">
    <location>
        <begin position="267"/>
        <end position="418"/>
    </location>
</feature>
<feature type="disulfide bond" description="Interchain (between alpha and beta chains)" evidence="2">
    <location>
        <begin position="271"/>
        <end position="406"/>
    </location>
</feature>
<feature type="mutagenesis site" description="Abolishes proteolytic processing." evidence="9">
    <original>RVSR</original>
    <variation>AVSA</variation>
    <location>
        <begin position="348"/>
        <end position="351"/>
    </location>
</feature>
<proteinExistence type="evidence at protein level"/>
<sequence length="590" mass="64512">MMPGLKLYGALILCVLVLPFSRPSSQVLDCREVRSSFQFLYPGMKWTPETPVSGSDLQVCQPKGLTCCSRKMEERYLLIAKQNMESSLQATSAQLKGLIIQNAALFQEAFDMVLRLGRNSTLMVLREEFPGLGAGASGAVTQLFLDMSLYILGSDANVNDMVSTFFSRLFPLTYRRLLGNGAVAGISEECLRGAWKGSSAYGSFPKMMMTRLSRSLLATRVFLQALNLGIEVVNTTQHLRAGRDCGRSLLKLWYCPHCQSLLEARPCRPLCVSTMGACLGGTTEVQPHWRAYVDELGSLAAAMKGEQDIEAVVLRLHVIIRQALKQAVASKSKVSAQVSGMCVHAPPRVSRAVPVSAEHTSASTVNHNRPPMNFDPDETLFGRRREFISGLRGFSQFYSGLGEALCSKEPTSLNSSLCWNGQEMTDKFPGPGLKRVHPHGSESKQKTPEPVISQIIDKLKHINQLLRMVTLPEKRWRARQGGGGARRNPSGPGQTDEDEEGLESGDCDDEDECTGVSGLGPPPRRKRLRIFADLADNLAIDDLTLHELLLTPRLATDAHGGSSIPGAAHVPTAAFIFTITIIIFITLGLQ</sequence>
<organism evidence="11">
    <name type="scientific">Danio rerio</name>
    <name type="common">Zebrafish</name>
    <name type="synonym">Brachydanio rerio</name>
    <dbReference type="NCBI Taxonomy" id="7955"/>
    <lineage>
        <taxon>Eukaryota</taxon>
        <taxon>Metazoa</taxon>
        <taxon>Chordata</taxon>
        <taxon>Craniata</taxon>
        <taxon>Vertebrata</taxon>
        <taxon>Euteleostomi</taxon>
        <taxon>Actinopterygii</taxon>
        <taxon>Neopterygii</taxon>
        <taxon>Teleostei</taxon>
        <taxon>Ostariophysi</taxon>
        <taxon>Cypriniformes</taxon>
        <taxon>Danionidae</taxon>
        <taxon>Danioninae</taxon>
        <taxon>Danio</taxon>
    </lineage>
</organism>
<evidence type="ECO:0000250" key="1">
    <source>
        <dbReference type="UniProtKB" id="P13265"/>
    </source>
</evidence>
<evidence type="ECO:0000250" key="2">
    <source>
        <dbReference type="UniProtKB" id="P35052"/>
    </source>
</evidence>
<evidence type="ECO:0000250" key="3">
    <source>
        <dbReference type="UniProtKB" id="P51654"/>
    </source>
</evidence>
<evidence type="ECO:0000250" key="4">
    <source>
        <dbReference type="UniProtKB" id="Q8CFZ4"/>
    </source>
</evidence>
<evidence type="ECO:0000255" key="5"/>
<evidence type="ECO:0000255" key="6">
    <source>
        <dbReference type="PROSITE-ProRule" id="PRU00498"/>
    </source>
</evidence>
<evidence type="ECO:0000255" key="7">
    <source>
        <dbReference type="RuleBase" id="RU003518"/>
    </source>
</evidence>
<evidence type="ECO:0000256" key="8">
    <source>
        <dbReference type="SAM" id="MobiDB-lite"/>
    </source>
</evidence>
<evidence type="ECO:0000269" key="9">
    <source>
    </source>
</evidence>
<evidence type="ECO:0000303" key="10">
    <source>
    </source>
</evidence>
<evidence type="ECO:0000312" key="11">
    <source>
        <dbReference type="EMBL" id="AAR05100.1"/>
    </source>
</evidence>
<evidence type="ECO:0000312" key="12">
    <source>
        <dbReference type="Proteomes" id="UP000000437"/>
    </source>
</evidence>
<evidence type="ECO:0000312" key="13">
    <source>
        <dbReference type="ZFIN" id="ZDB-GENE-031212-1"/>
    </source>
</evidence>